<accession>Q1RJ48</accession>
<evidence type="ECO:0000255" key="1">
    <source>
        <dbReference type="HAMAP-Rule" id="MF_00184"/>
    </source>
</evidence>
<evidence type="ECO:0000255" key="2">
    <source>
        <dbReference type="PROSITE-ProRule" id="PRU01228"/>
    </source>
</evidence>
<organism>
    <name type="scientific">Rickettsia bellii (strain RML369-C)</name>
    <dbReference type="NCBI Taxonomy" id="336407"/>
    <lineage>
        <taxon>Bacteria</taxon>
        <taxon>Pseudomonadati</taxon>
        <taxon>Pseudomonadota</taxon>
        <taxon>Alphaproteobacteria</taxon>
        <taxon>Rickettsiales</taxon>
        <taxon>Rickettsiaceae</taxon>
        <taxon>Rickettsieae</taxon>
        <taxon>Rickettsia</taxon>
        <taxon>belli group</taxon>
    </lineage>
</organism>
<name>SYT_RICBR</name>
<dbReference type="EC" id="6.1.1.3" evidence="1"/>
<dbReference type="EMBL" id="CP000087">
    <property type="protein sequence ID" value="ABE04616.1"/>
    <property type="molecule type" value="Genomic_DNA"/>
</dbReference>
<dbReference type="RefSeq" id="WP_011477207.1">
    <property type="nucleotide sequence ID" value="NC_007940.1"/>
</dbReference>
<dbReference type="SMR" id="Q1RJ48"/>
<dbReference type="KEGG" id="rbe:RBE_0535"/>
<dbReference type="eggNOG" id="COG0441">
    <property type="taxonomic scope" value="Bacteria"/>
</dbReference>
<dbReference type="HOGENOM" id="CLU_008554_0_1_5"/>
<dbReference type="OrthoDB" id="9802304at2"/>
<dbReference type="Proteomes" id="UP000001951">
    <property type="component" value="Chromosome"/>
</dbReference>
<dbReference type="GO" id="GO:0005737">
    <property type="term" value="C:cytoplasm"/>
    <property type="evidence" value="ECO:0007669"/>
    <property type="project" value="UniProtKB-SubCell"/>
</dbReference>
<dbReference type="GO" id="GO:0005524">
    <property type="term" value="F:ATP binding"/>
    <property type="evidence" value="ECO:0007669"/>
    <property type="project" value="UniProtKB-UniRule"/>
</dbReference>
<dbReference type="GO" id="GO:0046872">
    <property type="term" value="F:metal ion binding"/>
    <property type="evidence" value="ECO:0007669"/>
    <property type="project" value="UniProtKB-KW"/>
</dbReference>
<dbReference type="GO" id="GO:0004829">
    <property type="term" value="F:threonine-tRNA ligase activity"/>
    <property type="evidence" value="ECO:0007669"/>
    <property type="project" value="UniProtKB-UniRule"/>
</dbReference>
<dbReference type="GO" id="GO:0000049">
    <property type="term" value="F:tRNA binding"/>
    <property type="evidence" value="ECO:0007669"/>
    <property type="project" value="UniProtKB-KW"/>
</dbReference>
<dbReference type="GO" id="GO:0006435">
    <property type="term" value="P:threonyl-tRNA aminoacylation"/>
    <property type="evidence" value="ECO:0007669"/>
    <property type="project" value="UniProtKB-UniRule"/>
</dbReference>
<dbReference type="CDD" id="cd01667">
    <property type="entry name" value="TGS_ThrRS"/>
    <property type="match status" value="1"/>
</dbReference>
<dbReference type="CDD" id="cd00860">
    <property type="entry name" value="ThrRS_anticodon"/>
    <property type="match status" value="1"/>
</dbReference>
<dbReference type="CDD" id="cd00771">
    <property type="entry name" value="ThrRS_core"/>
    <property type="match status" value="1"/>
</dbReference>
<dbReference type="FunFam" id="3.10.20.30:FF:000005">
    <property type="entry name" value="Threonine--tRNA ligase"/>
    <property type="match status" value="1"/>
</dbReference>
<dbReference type="FunFam" id="3.30.54.20:FF:000002">
    <property type="entry name" value="Threonine--tRNA ligase"/>
    <property type="match status" value="1"/>
</dbReference>
<dbReference type="FunFam" id="3.30.930.10:FF:000002">
    <property type="entry name" value="Threonine--tRNA ligase"/>
    <property type="match status" value="1"/>
</dbReference>
<dbReference type="FunFam" id="3.40.50.800:FF:000001">
    <property type="entry name" value="Threonine--tRNA ligase"/>
    <property type="match status" value="1"/>
</dbReference>
<dbReference type="FunFam" id="3.30.980.10:FF:000005">
    <property type="entry name" value="Threonyl-tRNA synthetase, mitochondrial"/>
    <property type="match status" value="1"/>
</dbReference>
<dbReference type="Gene3D" id="3.10.20.30">
    <property type="match status" value="1"/>
</dbReference>
<dbReference type="Gene3D" id="3.30.54.20">
    <property type="match status" value="1"/>
</dbReference>
<dbReference type="Gene3D" id="3.40.50.800">
    <property type="entry name" value="Anticodon-binding domain"/>
    <property type="match status" value="1"/>
</dbReference>
<dbReference type="Gene3D" id="3.30.930.10">
    <property type="entry name" value="Bira Bifunctional Protein, Domain 2"/>
    <property type="match status" value="1"/>
</dbReference>
<dbReference type="Gene3D" id="3.30.980.10">
    <property type="entry name" value="Threonyl-trna Synthetase, Chain A, domain 2"/>
    <property type="match status" value="1"/>
</dbReference>
<dbReference type="HAMAP" id="MF_00184">
    <property type="entry name" value="Thr_tRNA_synth"/>
    <property type="match status" value="1"/>
</dbReference>
<dbReference type="InterPro" id="IPR002314">
    <property type="entry name" value="aa-tRNA-synt_IIb"/>
</dbReference>
<dbReference type="InterPro" id="IPR006195">
    <property type="entry name" value="aa-tRNA-synth_II"/>
</dbReference>
<dbReference type="InterPro" id="IPR045864">
    <property type="entry name" value="aa-tRNA-synth_II/BPL/LPL"/>
</dbReference>
<dbReference type="InterPro" id="IPR004154">
    <property type="entry name" value="Anticodon-bd"/>
</dbReference>
<dbReference type="InterPro" id="IPR036621">
    <property type="entry name" value="Anticodon-bd_dom_sf"/>
</dbReference>
<dbReference type="InterPro" id="IPR012675">
    <property type="entry name" value="Beta-grasp_dom_sf"/>
</dbReference>
<dbReference type="InterPro" id="IPR004095">
    <property type="entry name" value="TGS"/>
</dbReference>
<dbReference type="InterPro" id="IPR012676">
    <property type="entry name" value="TGS-like"/>
</dbReference>
<dbReference type="InterPro" id="IPR002320">
    <property type="entry name" value="Thr-tRNA-ligase_IIa"/>
</dbReference>
<dbReference type="InterPro" id="IPR018163">
    <property type="entry name" value="Thr/Ala-tRNA-synth_IIc_edit"/>
</dbReference>
<dbReference type="InterPro" id="IPR047246">
    <property type="entry name" value="ThrRS_anticodon"/>
</dbReference>
<dbReference type="InterPro" id="IPR033728">
    <property type="entry name" value="ThrRS_core"/>
</dbReference>
<dbReference type="InterPro" id="IPR012947">
    <property type="entry name" value="tRNA_SAD"/>
</dbReference>
<dbReference type="NCBIfam" id="TIGR00418">
    <property type="entry name" value="thrS"/>
    <property type="match status" value="1"/>
</dbReference>
<dbReference type="PANTHER" id="PTHR11451:SF44">
    <property type="entry name" value="THREONINE--TRNA LIGASE, CHLOROPLASTIC_MITOCHONDRIAL 2"/>
    <property type="match status" value="1"/>
</dbReference>
<dbReference type="PANTHER" id="PTHR11451">
    <property type="entry name" value="THREONINE-TRNA LIGASE"/>
    <property type="match status" value="1"/>
</dbReference>
<dbReference type="Pfam" id="PF03129">
    <property type="entry name" value="HGTP_anticodon"/>
    <property type="match status" value="1"/>
</dbReference>
<dbReference type="Pfam" id="PF02824">
    <property type="entry name" value="TGS"/>
    <property type="match status" value="1"/>
</dbReference>
<dbReference type="Pfam" id="PF00587">
    <property type="entry name" value="tRNA-synt_2b"/>
    <property type="match status" value="1"/>
</dbReference>
<dbReference type="Pfam" id="PF07973">
    <property type="entry name" value="tRNA_SAD"/>
    <property type="match status" value="1"/>
</dbReference>
<dbReference type="PRINTS" id="PR01047">
    <property type="entry name" value="TRNASYNTHTHR"/>
</dbReference>
<dbReference type="SMART" id="SM00863">
    <property type="entry name" value="tRNA_SAD"/>
    <property type="match status" value="1"/>
</dbReference>
<dbReference type="SUPFAM" id="SSF52954">
    <property type="entry name" value="Class II aaRS ABD-related"/>
    <property type="match status" value="1"/>
</dbReference>
<dbReference type="SUPFAM" id="SSF55681">
    <property type="entry name" value="Class II aaRS and biotin synthetases"/>
    <property type="match status" value="1"/>
</dbReference>
<dbReference type="SUPFAM" id="SSF81271">
    <property type="entry name" value="TGS-like"/>
    <property type="match status" value="1"/>
</dbReference>
<dbReference type="SUPFAM" id="SSF55186">
    <property type="entry name" value="ThrRS/AlaRS common domain"/>
    <property type="match status" value="1"/>
</dbReference>
<dbReference type="PROSITE" id="PS50862">
    <property type="entry name" value="AA_TRNA_LIGASE_II"/>
    <property type="match status" value="1"/>
</dbReference>
<dbReference type="PROSITE" id="PS51880">
    <property type="entry name" value="TGS"/>
    <property type="match status" value="1"/>
</dbReference>
<comment type="function">
    <text evidence="1">Catalyzes the attachment of threonine to tRNA(Thr) in a two-step reaction: L-threonine is first activated by ATP to form Thr-AMP and then transferred to the acceptor end of tRNA(Thr). Also edits incorrectly charged L-seryl-tRNA(Thr).</text>
</comment>
<comment type="catalytic activity">
    <reaction evidence="1">
        <text>tRNA(Thr) + L-threonine + ATP = L-threonyl-tRNA(Thr) + AMP + diphosphate + H(+)</text>
        <dbReference type="Rhea" id="RHEA:24624"/>
        <dbReference type="Rhea" id="RHEA-COMP:9670"/>
        <dbReference type="Rhea" id="RHEA-COMP:9704"/>
        <dbReference type="ChEBI" id="CHEBI:15378"/>
        <dbReference type="ChEBI" id="CHEBI:30616"/>
        <dbReference type="ChEBI" id="CHEBI:33019"/>
        <dbReference type="ChEBI" id="CHEBI:57926"/>
        <dbReference type="ChEBI" id="CHEBI:78442"/>
        <dbReference type="ChEBI" id="CHEBI:78534"/>
        <dbReference type="ChEBI" id="CHEBI:456215"/>
        <dbReference type="EC" id="6.1.1.3"/>
    </reaction>
</comment>
<comment type="cofactor">
    <cofactor evidence="1">
        <name>Zn(2+)</name>
        <dbReference type="ChEBI" id="CHEBI:29105"/>
    </cofactor>
    <text evidence="1">Binds 1 zinc ion per subunit.</text>
</comment>
<comment type="subunit">
    <text evidence="1">Homodimer.</text>
</comment>
<comment type="subcellular location">
    <subcellularLocation>
        <location evidence="1">Cytoplasm</location>
    </subcellularLocation>
</comment>
<comment type="similarity">
    <text evidence="1">Belongs to the class-II aminoacyl-tRNA synthetase family.</text>
</comment>
<gene>
    <name evidence="1" type="primary">thrS</name>
    <name type="ordered locus">RBE_0535</name>
</gene>
<feature type="chain" id="PRO_0000277989" description="Threonine--tRNA ligase">
    <location>
        <begin position="1"/>
        <end position="635"/>
    </location>
</feature>
<feature type="domain" description="TGS" evidence="2">
    <location>
        <begin position="1"/>
        <end position="61"/>
    </location>
</feature>
<feature type="region of interest" description="Catalytic" evidence="1">
    <location>
        <begin position="242"/>
        <end position="533"/>
    </location>
</feature>
<feature type="binding site" evidence="1">
    <location>
        <position position="333"/>
    </location>
    <ligand>
        <name>Zn(2+)</name>
        <dbReference type="ChEBI" id="CHEBI:29105"/>
    </ligand>
</feature>
<feature type="binding site" evidence="1">
    <location>
        <position position="384"/>
    </location>
    <ligand>
        <name>Zn(2+)</name>
        <dbReference type="ChEBI" id="CHEBI:29105"/>
    </ligand>
</feature>
<feature type="binding site" evidence="1">
    <location>
        <position position="510"/>
    </location>
    <ligand>
        <name>Zn(2+)</name>
        <dbReference type="ChEBI" id="CHEBI:29105"/>
    </ligand>
</feature>
<protein>
    <recommendedName>
        <fullName evidence="1">Threonine--tRNA ligase</fullName>
        <ecNumber evidence="1">6.1.1.3</ecNumber>
    </recommendedName>
    <alternativeName>
        <fullName evidence="1">Threonyl-tRNA synthetase</fullName>
        <shortName evidence="1">ThrRS</shortName>
    </alternativeName>
</protein>
<proteinExistence type="inferred from homology"/>
<reference key="1">
    <citation type="journal article" date="2006" name="PLoS Genet.">
        <title>Genome sequence of Rickettsia bellii illuminates the role of amoebae in gene exchanges between intracellular pathogens.</title>
        <authorList>
            <person name="Ogata H."/>
            <person name="La Scola B."/>
            <person name="Audic S."/>
            <person name="Renesto P."/>
            <person name="Blanc G."/>
            <person name="Robert C."/>
            <person name="Fournier P.-E."/>
            <person name="Claverie J.-M."/>
            <person name="Raoult D."/>
        </authorList>
    </citation>
    <scope>NUCLEOTIDE SEQUENCE [LARGE SCALE GENOMIC DNA]</scope>
    <source>
        <strain>RML369-C</strain>
    </source>
</reference>
<sequence length="635" mass="72704">MINISFPDGSVKQFEKNITAFEIAVVISTSLAKAAMIAEINGDLKDLSTQIDNDCRLRILTAKDPECLEVIRHDAAHLTAEAVKELFPETQVTIGPAIENGYYYDFARDKPFTTDDLAVIEAKMHELAKKNEKVTRELWDREKAVEFFKSIGEHYKAEIIASIPSNEPISLYRQGNFIDLCRGPHAPSTGFVKHFKLMKVAGAYWRGDSRNEVLQRIYGTAWATKEQLESYLFMLEEAEKRDHRKLGKELDLFHFQEEAQGMVFWHDKGWSVYNTIEQYIRRKIRKNGYIEVKTPVLVDKSLWELSGHWEKFRDDMFALETDDKTLALKPMNCPCHVQIFKQGIKSYRDLPLRMSEFGLCHRNEASGALHGLMRVRSLVQDDAHIFCAEEQITDETVSFCKLLTEVYKDFGFTDIKVKFSDRPEVRAGSSETWDKAENALKEAVEKAGYSYTLNPGEGAFYGPKLEFVLTDAIGRQWQCGTLQMDFVLPERLDASYVAASGEKKRPVMLHRAILGSLERFIGILIEEYAGRFPLWLAPVQVAIATITSDLNDYALEVQKALIESGVRVDINISPDKINYKIREFSNQKVPMIAVIGKQEKENKQVTIRRLGTTEQEVLSIEQLIEYIREENSKYI</sequence>
<keyword id="KW-0030">Aminoacyl-tRNA synthetase</keyword>
<keyword id="KW-0067">ATP-binding</keyword>
<keyword id="KW-0963">Cytoplasm</keyword>
<keyword id="KW-0436">Ligase</keyword>
<keyword id="KW-0479">Metal-binding</keyword>
<keyword id="KW-0547">Nucleotide-binding</keyword>
<keyword id="KW-0648">Protein biosynthesis</keyword>
<keyword id="KW-0694">RNA-binding</keyword>
<keyword id="KW-0820">tRNA-binding</keyword>
<keyword id="KW-0862">Zinc</keyword>